<dbReference type="EC" id="2.7.7.6" evidence="1"/>
<dbReference type="EMBL" id="CP000771">
    <property type="protein sequence ID" value="ABS60957.1"/>
    <property type="molecule type" value="Genomic_DNA"/>
</dbReference>
<dbReference type="RefSeq" id="WP_011994270.1">
    <property type="nucleotide sequence ID" value="NC_009718.1"/>
</dbReference>
<dbReference type="SMR" id="A7HM24"/>
<dbReference type="STRING" id="381764.Fnod_1110"/>
<dbReference type="KEGG" id="fno:Fnod_1110"/>
<dbReference type="eggNOG" id="COG0202">
    <property type="taxonomic scope" value="Bacteria"/>
</dbReference>
<dbReference type="HOGENOM" id="CLU_053084_0_1_0"/>
<dbReference type="OrthoDB" id="9805706at2"/>
<dbReference type="Proteomes" id="UP000002415">
    <property type="component" value="Chromosome"/>
</dbReference>
<dbReference type="GO" id="GO:0005737">
    <property type="term" value="C:cytoplasm"/>
    <property type="evidence" value="ECO:0007669"/>
    <property type="project" value="UniProtKB-ARBA"/>
</dbReference>
<dbReference type="GO" id="GO:0000428">
    <property type="term" value="C:DNA-directed RNA polymerase complex"/>
    <property type="evidence" value="ECO:0007669"/>
    <property type="project" value="UniProtKB-KW"/>
</dbReference>
<dbReference type="GO" id="GO:0003677">
    <property type="term" value="F:DNA binding"/>
    <property type="evidence" value="ECO:0007669"/>
    <property type="project" value="UniProtKB-UniRule"/>
</dbReference>
<dbReference type="GO" id="GO:0003899">
    <property type="term" value="F:DNA-directed RNA polymerase activity"/>
    <property type="evidence" value="ECO:0007669"/>
    <property type="project" value="UniProtKB-UniRule"/>
</dbReference>
<dbReference type="GO" id="GO:0046983">
    <property type="term" value="F:protein dimerization activity"/>
    <property type="evidence" value="ECO:0007669"/>
    <property type="project" value="InterPro"/>
</dbReference>
<dbReference type="GO" id="GO:0006351">
    <property type="term" value="P:DNA-templated transcription"/>
    <property type="evidence" value="ECO:0007669"/>
    <property type="project" value="UniProtKB-UniRule"/>
</dbReference>
<dbReference type="CDD" id="cd06928">
    <property type="entry name" value="RNAP_alpha_NTD"/>
    <property type="match status" value="1"/>
</dbReference>
<dbReference type="FunFam" id="2.170.120.12:FF:000001">
    <property type="entry name" value="DNA-directed RNA polymerase subunit alpha"/>
    <property type="match status" value="1"/>
</dbReference>
<dbReference type="Gene3D" id="1.10.150.20">
    <property type="entry name" value="5' to 3' exonuclease, C-terminal subdomain"/>
    <property type="match status" value="1"/>
</dbReference>
<dbReference type="Gene3D" id="2.170.120.12">
    <property type="entry name" value="DNA-directed RNA polymerase, insert domain"/>
    <property type="match status" value="1"/>
</dbReference>
<dbReference type="Gene3D" id="3.30.1360.10">
    <property type="entry name" value="RNA polymerase, RBP11-like subunit"/>
    <property type="match status" value="1"/>
</dbReference>
<dbReference type="HAMAP" id="MF_00059">
    <property type="entry name" value="RNApol_bact_RpoA"/>
    <property type="match status" value="1"/>
</dbReference>
<dbReference type="InterPro" id="IPR011262">
    <property type="entry name" value="DNA-dir_RNA_pol_insert"/>
</dbReference>
<dbReference type="InterPro" id="IPR011263">
    <property type="entry name" value="DNA-dir_RNA_pol_RpoA/D/Rpb3"/>
</dbReference>
<dbReference type="InterPro" id="IPR011773">
    <property type="entry name" value="DNA-dir_RpoA"/>
</dbReference>
<dbReference type="InterPro" id="IPR036603">
    <property type="entry name" value="RBP11-like"/>
</dbReference>
<dbReference type="InterPro" id="IPR011260">
    <property type="entry name" value="RNAP_asu_C"/>
</dbReference>
<dbReference type="InterPro" id="IPR036643">
    <property type="entry name" value="RNApol_insert_sf"/>
</dbReference>
<dbReference type="NCBIfam" id="NF003513">
    <property type="entry name" value="PRK05182.1-2"/>
    <property type="match status" value="1"/>
</dbReference>
<dbReference type="NCBIfam" id="NF003519">
    <property type="entry name" value="PRK05182.2-5"/>
    <property type="match status" value="1"/>
</dbReference>
<dbReference type="NCBIfam" id="TIGR02027">
    <property type="entry name" value="rpoA"/>
    <property type="match status" value="1"/>
</dbReference>
<dbReference type="Pfam" id="PF01000">
    <property type="entry name" value="RNA_pol_A_bac"/>
    <property type="match status" value="1"/>
</dbReference>
<dbReference type="Pfam" id="PF03118">
    <property type="entry name" value="RNA_pol_A_CTD"/>
    <property type="match status" value="1"/>
</dbReference>
<dbReference type="Pfam" id="PF01193">
    <property type="entry name" value="RNA_pol_L"/>
    <property type="match status" value="1"/>
</dbReference>
<dbReference type="SMART" id="SM00662">
    <property type="entry name" value="RPOLD"/>
    <property type="match status" value="1"/>
</dbReference>
<dbReference type="SUPFAM" id="SSF47789">
    <property type="entry name" value="C-terminal domain of RNA polymerase alpha subunit"/>
    <property type="match status" value="1"/>
</dbReference>
<dbReference type="SUPFAM" id="SSF56553">
    <property type="entry name" value="Insert subdomain of RNA polymerase alpha subunit"/>
    <property type="match status" value="1"/>
</dbReference>
<dbReference type="SUPFAM" id="SSF55257">
    <property type="entry name" value="RBP11-like subunits of RNA polymerase"/>
    <property type="match status" value="1"/>
</dbReference>
<keyword id="KW-0240">DNA-directed RNA polymerase</keyword>
<keyword id="KW-0548">Nucleotidyltransferase</keyword>
<keyword id="KW-1185">Reference proteome</keyword>
<keyword id="KW-0804">Transcription</keyword>
<keyword id="KW-0808">Transferase</keyword>
<proteinExistence type="inferred from homology"/>
<evidence type="ECO:0000255" key="1">
    <source>
        <dbReference type="HAMAP-Rule" id="MF_00059"/>
    </source>
</evidence>
<gene>
    <name evidence="1" type="primary">rpoA</name>
    <name type="ordered locus">Fnod_1110</name>
</gene>
<name>RPOA_FERNB</name>
<sequence>MIQITGRKFKLEEQVEHEDHYYARYSLSPLEKGYAVTVGNTLRRVLLSSIPSFAITDVRFVKPEKYHEFDTIEGAKEDIMDILLNLKKVQLRVDTYVESPVKLTINKKGPGVLTAGDIECPAGVVVVNPGHYLATLNEDADLEIELYATFGKGFVPAADRNERPEIGWIVLDGVYSPVIKVNWLVENVRVDKRTDYEKLILEIWTKKSIKPSEALKHSLKIILDHFMFIEQSLSDVEELPIPIIQETAVVTEEIGSPEDVMSKKVEELELSARSLNCLKRDKIETIGDLLSRTEEELMKIKNFGLKSLEEVREKLRDKFGLSLRKGDK</sequence>
<reference key="1">
    <citation type="submission" date="2007-07" db="EMBL/GenBank/DDBJ databases">
        <title>Complete sequence of Fervidobacterium nodosum Rt17-B1.</title>
        <authorList>
            <consortium name="US DOE Joint Genome Institute"/>
            <person name="Copeland A."/>
            <person name="Lucas S."/>
            <person name="Lapidus A."/>
            <person name="Barry K."/>
            <person name="Glavina del Rio T."/>
            <person name="Dalin E."/>
            <person name="Tice H."/>
            <person name="Pitluck S."/>
            <person name="Saunders E."/>
            <person name="Brettin T."/>
            <person name="Bruce D."/>
            <person name="Detter J.C."/>
            <person name="Han C."/>
            <person name="Schmutz J."/>
            <person name="Larimer F."/>
            <person name="Land M."/>
            <person name="Hauser L."/>
            <person name="Kyrpides N."/>
            <person name="Mikhailova N."/>
            <person name="Nelson K."/>
            <person name="Gogarten J.P."/>
            <person name="Noll K."/>
            <person name="Richardson P."/>
        </authorList>
    </citation>
    <scope>NUCLEOTIDE SEQUENCE [LARGE SCALE GENOMIC DNA]</scope>
    <source>
        <strain>ATCC 35602 / DSM 5306 / Rt17-B1</strain>
    </source>
</reference>
<comment type="function">
    <text evidence="1">DNA-dependent RNA polymerase catalyzes the transcription of DNA into RNA using the four ribonucleoside triphosphates as substrates.</text>
</comment>
<comment type="catalytic activity">
    <reaction evidence="1">
        <text>RNA(n) + a ribonucleoside 5'-triphosphate = RNA(n+1) + diphosphate</text>
        <dbReference type="Rhea" id="RHEA:21248"/>
        <dbReference type="Rhea" id="RHEA-COMP:14527"/>
        <dbReference type="Rhea" id="RHEA-COMP:17342"/>
        <dbReference type="ChEBI" id="CHEBI:33019"/>
        <dbReference type="ChEBI" id="CHEBI:61557"/>
        <dbReference type="ChEBI" id="CHEBI:140395"/>
        <dbReference type="EC" id="2.7.7.6"/>
    </reaction>
</comment>
<comment type="subunit">
    <text evidence="1">Homodimer. The RNAP catalytic core consists of 2 alpha, 1 beta, 1 beta' and 1 omega subunit. When a sigma factor is associated with the core the holoenzyme is formed, which can initiate transcription.</text>
</comment>
<comment type="domain">
    <text evidence="1">The N-terminal domain is essential for RNAP assembly and basal transcription, whereas the C-terminal domain is involved in interaction with transcriptional regulators and with upstream promoter elements.</text>
</comment>
<comment type="similarity">
    <text evidence="1">Belongs to the RNA polymerase alpha chain family.</text>
</comment>
<feature type="chain" id="PRO_0000323632" description="DNA-directed RNA polymerase subunit alpha">
    <location>
        <begin position="1"/>
        <end position="328"/>
    </location>
</feature>
<feature type="region of interest" description="Alpha N-terminal domain (alpha-NTD)" evidence="1">
    <location>
        <begin position="1"/>
        <end position="230"/>
    </location>
</feature>
<feature type="region of interest" description="Alpha C-terminal domain (alpha-CTD)" evidence="1">
    <location>
        <begin position="257"/>
        <end position="328"/>
    </location>
</feature>
<protein>
    <recommendedName>
        <fullName evidence="1">DNA-directed RNA polymerase subunit alpha</fullName>
        <shortName evidence="1">RNAP subunit alpha</shortName>
        <ecNumber evidence="1">2.7.7.6</ecNumber>
    </recommendedName>
    <alternativeName>
        <fullName evidence="1">RNA polymerase subunit alpha</fullName>
    </alternativeName>
    <alternativeName>
        <fullName evidence="1">Transcriptase subunit alpha</fullName>
    </alternativeName>
</protein>
<organism>
    <name type="scientific">Fervidobacterium nodosum (strain ATCC 35602 / DSM 5306 / Rt17-B1)</name>
    <dbReference type="NCBI Taxonomy" id="381764"/>
    <lineage>
        <taxon>Bacteria</taxon>
        <taxon>Thermotogati</taxon>
        <taxon>Thermotogota</taxon>
        <taxon>Thermotogae</taxon>
        <taxon>Thermotogales</taxon>
        <taxon>Fervidobacteriaceae</taxon>
        <taxon>Fervidobacterium</taxon>
    </lineage>
</organism>
<accession>A7HM24</accession>